<reference evidence="6" key="1">
    <citation type="journal article" date="1998" name="Science">
        <title>Genome sequence of the nematode C. elegans: a platform for investigating biology.</title>
        <authorList>
            <consortium name="The C. elegans sequencing consortium"/>
        </authorList>
    </citation>
    <scope>NUCLEOTIDE SEQUENCE [LARGE SCALE GENOMIC DNA]</scope>
    <source>
        <strain evidence="6">Bristol N2</strain>
    </source>
</reference>
<reference evidence="5" key="2">
    <citation type="journal article" date="2018" name="Genetics">
        <title>Endoplasmic Reticulum Homeostasis Is Modulated by the Forkhead Transcription Factor FKH-9 During Infection of Caenorhabditis elegans.</title>
        <authorList>
            <person name="Tillman E.J."/>
            <person name="Richardson C.E."/>
            <person name="Cattie D.J."/>
            <person name="Reddy K.C."/>
            <person name="Lehrbach N.J."/>
            <person name="Droste R."/>
            <person name="Ruvkun G."/>
            <person name="Kim D.H."/>
        </authorList>
    </citation>
    <scope>FUNCTION</scope>
</reference>
<evidence type="ECO:0000250" key="1">
    <source>
        <dbReference type="UniProtKB" id="F8VPQ2"/>
    </source>
</evidence>
<evidence type="ECO:0000255" key="2">
    <source>
        <dbReference type="PROSITE-ProRule" id="PRU00355"/>
    </source>
</evidence>
<evidence type="ECO:0000256" key="3">
    <source>
        <dbReference type="SAM" id="MobiDB-lite"/>
    </source>
</evidence>
<evidence type="ECO:0000269" key="4">
    <source>
    </source>
</evidence>
<evidence type="ECO:0000305" key="5"/>
<evidence type="ECO:0000312" key="6">
    <source>
        <dbReference type="Proteomes" id="UP000001940"/>
    </source>
</evidence>
<evidence type="ECO:0000312" key="7">
    <source>
        <dbReference type="WormBase" id="Y108G3AL.7a"/>
    </source>
</evidence>
<evidence type="ECO:0000312" key="8">
    <source>
        <dbReference type="WormBase" id="Y108G3AL.7b"/>
    </source>
</evidence>
<evidence type="ECO:0000312" key="9">
    <source>
        <dbReference type="WormBase" id="Y108G3AL.7c"/>
    </source>
</evidence>
<evidence type="ECO:0000312" key="10">
    <source>
        <dbReference type="WormBase" id="Y108G3AL.7d"/>
    </source>
</evidence>
<evidence type="ECO:0000312" key="11">
    <source>
        <dbReference type="WormBase" id="Y108G3AL.7e"/>
    </source>
</evidence>
<evidence type="ECO:0000312" key="12">
    <source>
        <dbReference type="WormBase" id="Y108G3AL.7f"/>
    </source>
</evidence>
<evidence type="ECO:0000312" key="13">
    <source>
        <dbReference type="WormBase" id="Y108G3AL.7g"/>
    </source>
</evidence>
<evidence type="ECO:0000312" key="14">
    <source>
        <dbReference type="WormBase" id="Y108G3AL.7h"/>
    </source>
</evidence>
<evidence type="ECO:0000312" key="15">
    <source>
        <dbReference type="WormBase" id="Y108G3AL.7i"/>
    </source>
</evidence>
<gene>
    <name evidence="8" type="primary">arid-1</name>
    <name evidence="8" type="ORF">Y108G3AL.7</name>
</gene>
<sequence>MSDDPAFLALGTEVSAKFKGAYCEAKIQKVDRSLKVKVSLKESPFGQMIVQDNDLPNAKFEINELTDVVFQRKFIRCQIQSIKDQSKYHVVFNDGDEKELRRTQLVLKGGKHFAADGNLDSMPLTNPESFSTPVIRGAAKRGAQKIRNAISEASGSRGGAVLLHNDDDENDEEDQEDGENEEDADDDDDDTEEQQQPRERRRAAAISAIGVLKKAIEDTQSEESSADSSEERERARSRRKRKDEASSAVTSDEEDQEDLATTDSENPVINGASSAAALSKTLQRKLEKQAMKREKQRLKEEEREEKLRLKEENREKKRREKARIMELKRLEKVYRTSNARIQENHEKSMTQIISHRSVRYFARFSDLKHRRKKKKLYLHEHRQKVNSRIRNVKLYFAWRFVAHKARLSYFARYALQWWRTSEDQAYSLIRTEKLLRSQRRRDWVGSWLEGLEREKIRFVVIHESYTQARRILKYIERGTEKRTFAERCDIEYEDIESSTVSSHFRDQEWFPAVLFPQVFSDENGSEGRQRIVRHMGNGQLVQVWEDDLVPFDWLPEYSFADVTAMTEKKPVEMRRKFKLAWRFATDYAQNRLDARSIRSILEWKFIRPSSRRLKITPIPVQAPSPNRCGEDHDDLVSTPNESDYDSDATIKNVDAETKDLFVAMLVQFHDAHNSVIDTNPTIQGHEVDLYYLYELAKKTGGPKKVYAANLWSDYAKKLVPAATDAEEELKTIFKNFLESYLAINTKLSWPMESLQPRTERKVVLPGQYSESRKKRTQAIMSQVQTPPTAPGSSKKGRVGSGGTRGRKRKVSSESVQLKKRNRKSSSRATTASPGPSEDRFSFQRPQDSDDVTDVPDDMTDHEDLLPEAATRKKYERKSQTPGRRSLSSRRDDTTPVSSMAAAPPKKGRPRKNTTVTTPVLSVPKSEGRGPRKEDTTTKFVRANVLSHILSGQKLRAFYGDEWFRANAIEDATDCTDEIMDIMLAHQDFFTPDTPRLSPSAIQDLDKVLKKIRAKTHYTGWNQRYDEFMKLEKLMVTVEDQMIARGRFRHLPRGRELKAETLALVEKHFRADDEDDGVPKTLAFYLKIAQEALSLSEKRAVADDDESSDSDTDFEQKPDTSAAAAVNGGKSESEEEEEEKTVVMGGDEEAEEEVKSEDVLVESVDQESPPTTSQGTTTPETAATGGLESESDEPEYPPVPEELVPPPPVLLENFPSTDRFSSGGSSNYPTLSRQGSINSMASPMFSPNSDLSLSGPLTLPRSGPLTMANIRQSPTPDEVVGSLRKRLSQTSESSESSELPPPPSAASKSKRIRRASERSIDSASEHHRMMRSPRILTTQHSSGALIFDISTTQPTDTSGPIEALSVRKPGRRKTVFAASPTLLTSGPLTLSSSAPPPPPASPAPPQHAQKTLGRPRKTPSTSSRKPEEEDEAEQIPTTVVGVTEEASVADSSAKEDLTSEDGSATPQDEKDDSESTTTTDTITPKSIRGGKRRRGGGRFGGSYPVKPAKPGRKPKDPHAEEGADEKDPEDQTPTTMTTSTPTRADSFQTQKNRMAKLMEGKPHDYSFLDLPDFDKIIEEAPKEDINILMEERTYELREIFAQCKADLSALEKRYRQQNEAKRKAEFAAKTASSAAAAQASSSTCSTPRP</sequence>
<proteinExistence type="inferred from homology"/>
<accession>A0A0K3AXH1</accession>
<accession>A0A0K3ARP6</accession>
<accession>A0A0K3AS59</accession>
<accession>A0A0K3AS65</accession>
<accession>A0A0K3AUK2</accession>
<accession>A0A0K3AV74</accession>
<accession>A0A0K3AVY5</accession>
<accession>A0A0K3AXH5</accession>
<accession>G4SB35</accession>
<accession>Q95Y31</accession>
<comment type="function">
    <text evidence="1 4">DNA-binding protein which modulates activity of several transcription factors (By similarity). Plays a role in the modulation of endoplasmic reticulum (ER) homeostasis during chemical and pathogen stress, including exposure to the Gram-negative bacterium P.aeruginosa (PubMed:30287474).</text>
</comment>
<comment type="subcellular location">
    <subcellularLocation>
        <location evidence="2 5">Nucleus</location>
    </subcellularLocation>
</comment>
<comment type="alternative products">
    <event type="alternative splicing"/>
    <isoform>
        <id>A0A0K3AXH1-1</id>
        <name evidence="8">b</name>
        <sequence type="displayed"/>
    </isoform>
    <isoform>
        <id>A0A0K3AXH1-2</id>
        <name evidence="7">a</name>
        <sequence type="described" ref="VSP_061281"/>
    </isoform>
    <isoform>
        <id>A0A0K3AXH1-3</id>
        <name evidence="9">c</name>
        <sequence type="described" ref="VSP_061280"/>
    </isoform>
    <isoform>
        <id>A0A0K3AXH1-4</id>
        <name evidence="10">d</name>
        <sequence type="described" ref="VSP_061280 VSP_061281"/>
    </isoform>
    <isoform>
        <id>A0A0K3AXH1-5</id>
        <name evidence="11">e</name>
        <sequence type="described" ref="VSP_061279"/>
    </isoform>
    <isoform>
        <id>A0A0K3AXH1-6</id>
        <name evidence="12">f</name>
        <sequence type="described" ref="VSP_061279 VSP_061281"/>
    </isoform>
    <isoform>
        <id>A0A0K3AXH1-7</id>
        <name evidence="13">g</name>
        <sequence type="described" ref="VSP_061278"/>
    </isoform>
    <isoform>
        <id>A0A0K3AXH1-8</id>
        <name evidence="14">h</name>
        <sequence type="described" ref="VSP_061278 VSP_061281"/>
    </isoform>
    <isoform>
        <id>A0A0K3AXH1-9</id>
        <name evidence="15">i</name>
        <sequence type="described" ref="VSP_061277"/>
    </isoform>
</comment>
<protein>
    <recommendedName>
        <fullName evidence="8">AT-rich interactive domain-containing protein arid-1</fullName>
    </recommendedName>
</protein>
<organism evidence="6">
    <name type="scientific">Caenorhabditis elegans</name>
    <dbReference type="NCBI Taxonomy" id="6239"/>
    <lineage>
        <taxon>Eukaryota</taxon>
        <taxon>Metazoa</taxon>
        <taxon>Ecdysozoa</taxon>
        <taxon>Nematoda</taxon>
        <taxon>Chromadorea</taxon>
        <taxon>Rhabditida</taxon>
        <taxon>Rhabditina</taxon>
        <taxon>Rhabditomorpha</taxon>
        <taxon>Rhabditoidea</taxon>
        <taxon>Rhabditidae</taxon>
        <taxon>Peloderinae</taxon>
        <taxon>Caenorhabditis</taxon>
    </lineage>
</organism>
<keyword id="KW-0025">Alternative splicing</keyword>
<keyword id="KW-0539">Nucleus</keyword>
<keyword id="KW-1185">Reference proteome</keyword>
<keyword id="KW-0804">Transcription</keyword>
<keyword id="KW-0805">Transcription regulation</keyword>
<feature type="chain" id="PRO_0000454296" description="AT-rich interactive domain-containing protein arid-1">
    <location>
        <begin position="1"/>
        <end position="1648"/>
    </location>
</feature>
<feature type="domain" description="ARID" evidence="2">
    <location>
        <begin position="655"/>
        <end position="745"/>
    </location>
</feature>
<feature type="region of interest" description="Disordered" evidence="3">
    <location>
        <begin position="150"/>
        <end position="270"/>
    </location>
</feature>
<feature type="region of interest" description="Disordered" evidence="3">
    <location>
        <begin position="284"/>
        <end position="307"/>
    </location>
</feature>
<feature type="region of interest" description="Disordered" evidence="3">
    <location>
        <begin position="763"/>
        <end position="935"/>
    </location>
</feature>
<feature type="region of interest" description="Disordered" evidence="3">
    <location>
        <begin position="1095"/>
        <end position="1563"/>
    </location>
</feature>
<feature type="region of interest" description="Disordered" evidence="3">
    <location>
        <begin position="1628"/>
        <end position="1648"/>
    </location>
</feature>
<feature type="compositionally biased region" description="Acidic residues" evidence="3">
    <location>
        <begin position="166"/>
        <end position="193"/>
    </location>
</feature>
<feature type="compositionally biased region" description="Acidic residues" evidence="3">
    <location>
        <begin position="219"/>
        <end position="228"/>
    </location>
</feature>
<feature type="compositionally biased region" description="Acidic residues" evidence="3">
    <location>
        <begin position="251"/>
        <end position="260"/>
    </location>
</feature>
<feature type="compositionally biased region" description="Polar residues" evidence="3">
    <location>
        <begin position="261"/>
        <end position="270"/>
    </location>
</feature>
<feature type="compositionally biased region" description="Acidic residues" evidence="3">
    <location>
        <begin position="848"/>
        <end position="860"/>
    </location>
</feature>
<feature type="compositionally biased region" description="Basic and acidic residues" evidence="3">
    <location>
        <begin position="861"/>
        <end position="878"/>
    </location>
</feature>
<feature type="compositionally biased region" description="Basic and acidic residues" evidence="3">
    <location>
        <begin position="925"/>
        <end position="935"/>
    </location>
</feature>
<feature type="compositionally biased region" description="Acidic residues" evidence="3">
    <location>
        <begin position="1102"/>
        <end position="1112"/>
    </location>
</feature>
<feature type="compositionally biased region" description="Acidic residues" evidence="3">
    <location>
        <begin position="1145"/>
        <end position="1154"/>
    </location>
</feature>
<feature type="compositionally biased region" description="Low complexity" evidence="3">
    <location>
        <begin position="1165"/>
        <end position="1185"/>
    </location>
</feature>
<feature type="compositionally biased region" description="Pro residues" evidence="3">
    <location>
        <begin position="1195"/>
        <end position="1208"/>
    </location>
</feature>
<feature type="compositionally biased region" description="Polar residues" evidence="3">
    <location>
        <begin position="1213"/>
        <end position="1251"/>
    </location>
</feature>
<feature type="compositionally biased region" description="Basic and acidic residues" evidence="3">
    <location>
        <begin position="1313"/>
        <end position="1326"/>
    </location>
</feature>
<feature type="compositionally biased region" description="Polar residues" evidence="3">
    <location>
        <begin position="1348"/>
        <end position="1357"/>
    </location>
</feature>
<feature type="compositionally biased region" description="Low complexity" evidence="3">
    <location>
        <begin position="1377"/>
        <end position="1392"/>
    </location>
</feature>
<feature type="compositionally biased region" description="Pro residues" evidence="3">
    <location>
        <begin position="1393"/>
        <end position="1404"/>
    </location>
</feature>
<feature type="compositionally biased region" description="Low complexity" evidence="3">
    <location>
        <begin position="1474"/>
        <end position="1486"/>
    </location>
</feature>
<feature type="compositionally biased region" description="Low complexity" evidence="3">
    <location>
        <begin position="1531"/>
        <end position="1541"/>
    </location>
</feature>
<feature type="compositionally biased region" description="Polar residues" evidence="3">
    <location>
        <begin position="1542"/>
        <end position="1551"/>
    </location>
</feature>
<feature type="splice variant" id="VSP_061277" description="In isoform i." evidence="5">
    <location>
        <begin position="1"/>
        <end position="1534"/>
    </location>
</feature>
<feature type="splice variant" id="VSP_061278" description="In isoform g and isoform h." evidence="5">
    <location>
        <begin position="1"/>
        <end position="1238"/>
    </location>
</feature>
<feature type="splice variant" id="VSP_061279" description="In isoform e and isoform f." evidence="5">
    <location>
        <begin position="1"/>
        <end position="663"/>
    </location>
</feature>
<feature type="splice variant" id="VSP_061280" description="In isoform c and isoform d." evidence="5">
    <location>
        <begin position="1"/>
        <end position="47"/>
    </location>
</feature>
<feature type="splice variant" id="VSP_061281" description="In isoform a, isoform d, isoform f and isoform h." evidence="5">
    <location>
        <begin position="1374"/>
        <end position="1376"/>
    </location>
</feature>
<name>ARID1_CAEEL</name>
<dbReference type="EMBL" id="BX284605">
    <property type="protein sequence ID" value="CCD74339.1"/>
    <property type="molecule type" value="Genomic_DNA"/>
</dbReference>
<dbReference type="EMBL" id="BX284605">
    <property type="protein sequence ID" value="CTQ86703.1"/>
    <property type="molecule type" value="Genomic_DNA"/>
</dbReference>
<dbReference type="EMBL" id="BX284605">
    <property type="protein sequence ID" value="CTQ86704.1"/>
    <property type="molecule type" value="Genomic_DNA"/>
</dbReference>
<dbReference type="EMBL" id="BX284605">
    <property type="protein sequence ID" value="CTQ86705.1"/>
    <property type="molecule type" value="Genomic_DNA"/>
</dbReference>
<dbReference type="EMBL" id="BX284605">
    <property type="protein sequence ID" value="CTQ86706.1"/>
    <property type="molecule type" value="Genomic_DNA"/>
</dbReference>
<dbReference type="EMBL" id="BX284605">
    <property type="protein sequence ID" value="CTQ86707.1"/>
    <property type="molecule type" value="Genomic_DNA"/>
</dbReference>
<dbReference type="EMBL" id="BX284605">
    <property type="protein sequence ID" value="CTQ86708.1"/>
    <property type="molecule type" value="Genomic_DNA"/>
</dbReference>
<dbReference type="EMBL" id="BX284605">
    <property type="protein sequence ID" value="CTQ86709.1"/>
    <property type="molecule type" value="Genomic_DNA"/>
</dbReference>
<dbReference type="EMBL" id="BX284605">
    <property type="protein sequence ID" value="CTQ86917.1"/>
    <property type="molecule type" value="Genomic_DNA"/>
</dbReference>
<dbReference type="RefSeq" id="NP_001041181.2">
    <molecule id="A0A0K3AXH1-2"/>
    <property type="nucleotide sequence ID" value="NM_001047716.4"/>
</dbReference>
<dbReference type="RefSeq" id="NP_001300004.1">
    <molecule id="A0A0K3AXH1-1"/>
    <property type="nucleotide sequence ID" value="NM_001313075.3"/>
</dbReference>
<dbReference type="RefSeq" id="NP_001300005.1">
    <molecule id="A0A0K3AXH1-3"/>
    <property type="nucleotide sequence ID" value="NM_001313076.3"/>
</dbReference>
<dbReference type="RefSeq" id="NP_001300006.1">
    <molecule id="A0A0K3AXH1-4"/>
    <property type="nucleotide sequence ID" value="NM_001313077.3"/>
</dbReference>
<dbReference type="RefSeq" id="NP_001300007.1">
    <molecule id="A0A0K3AXH1-5"/>
    <property type="nucleotide sequence ID" value="NM_001313078.3"/>
</dbReference>
<dbReference type="RefSeq" id="NP_001300008.1">
    <molecule id="A0A0K3AXH1-6"/>
    <property type="nucleotide sequence ID" value="NM_001313079.3"/>
</dbReference>
<dbReference type="RefSeq" id="NP_001300009.1">
    <molecule id="A0A0K3AXH1-7"/>
    <property type="nucleotide sequence ID" value="NM_001313080.3"/>
</dbReference>
<dbReference type="RefSeq" id="NP_001300010.1">
    <molecule id="A0A0K3AXH1-8"/>
    <property type="nucleotide sequence ID" value="NM_001313081.3"/>
</dbReference>
<dbReference type="RefSeq" id="NP_001300218.1">
    <molecule id="A0A0K3AXH1-9"/>
    <property type="nucleotide sequence ID" value="NM_001313289.3"/>
</dbReference>
<dbReference type="SMR" id="A0A0K3AXH1"/>
<dbReference type="FunCoup" id="A0A0K3AXH1">
    <property type="interactions" value="389"/>
</dbReference>
<dbReference type="STRING" id="6239.Y108G3AL.7b.1"/>
<dbReference type="PaxDb" id="6239-Y108G3AL.7"/>
<dbReference type="EnsemblMetazoa" id="Y108G3AL.7a.1">
    <molecule id="A0A0K3AXH1-2"/>
    <property type="protein sequence ID" value="Y108G3AL.7a.1"/>
    <property type="gene ID" value="WBGene00044689"/>
</dbReference>
<dbReference type="EnsemblMetazoa" id="Y108G3AL.7b.1">
    <molecule id="A0A0K3AXH1-1"/>
    <property type="protein sequence ID" value="Y108G3AL.7b.1"/>
    <property type="gene ID" value="WBGene00044689"/>
</dbReference>
<dbReference type="EnsemblMetazoa" id="Y108G3AL.7c.1">
    <molecule id="A0A0K3AXH1-3"/>
    <property type="protein sequence ID" value="Y108G3AL.7c.1"/>
    <property type="gene ID" value="WBGene00044689"/>
</dbReference>
<dbReference type="EnsemblMetazoa" id="Y108G3AL.7d.1">
    <molecule id="A0A0K3AXH1-4"/>
    <property type="protein sequence ID" value="Y108G3AL.7d.1"/>
    <property type="gene ID" value="WBGene00044689"/>
</dbReference>
<dbReference type="EnsemblMetazoa" id="Y108G3AL.7e.1">
    <molecule id="A0A0K3AXH1-5"/>
    <property type="protein sequence ID" value="Y108G3AL.7e.1"/>
    <property type="gene ID" value="WBGene00044689"/>
</dbReference>
<dbReference type="EnsemblMetazoa" id="Y108G3AL.7f.1">
    <molecule id="A0A0K3AXH1-6"/>
    <property type="protein sequence ID" value="Y108G3AL.7f.1"/>
    <property type="gene ID" value="WBGene00044689"/>
</dbReference>
<dbReference type="EnsemblMetazoa" id="Y108G3AL.7g.1">
    <molecule id="A0A0K3AXH1-7"/>
    <property type="protein sequence ID" value="Y108G3AL.7g.1"/>
    <property type="gene ID" value="WBGene00044689"/>
</dbReference>
<dbReference type="EnsemblMetazoa" id="Y108G3AL.7h.1">
    <molecule id="A0A0K3AXH1-8"/>
    <property type="protein sequence ID" value="Y108G3AL.7h.1"/>
    <property type="gene ID" value="WBGene00044689"/>
</dbReference>
<dbReference type="EnsemblMetazoa" id="Y108G3AL.7i.1">
    <molecule id="A0A0K3AXH1-9"/>
    <property type="protein sequence ID" value="Y108G3AL.7i.1"/>
    <property type="gene ID" value="WBGene00044689"/>
</dbReference>
<dbReference type="GeneID" id="4363100"/>
<dbReference type="KEGG" id="cel:CELE_Y108G3AL.7"/>
<dbReference type="UCSC" id="Y108G3AL.7">
    <property type="organism name" value="c. elegans"/>
</dbReference>
<dbReference type="AGR" id="WB:WBGene00044689"/>
<dbReference type="CTD" id="4363100"/>
<dbReference type="WormBase" id="Y108G3AL.7a">
    <molecule id="A0A0K3AXH1-2"/>
    <property type="protein sequence ID" value="CE45961"/>
    <property type="gene ID" value="WBGene00044689"/>
    <property type="gene designation" value="arid-1"/>
</dbReference>
<dbReference type="WormBase" id="Y108G3AL.7b">
    <molecule id="A0A0K3AXH1-1"/>
    <property type="protein sequence ID" value="CE50771"/>
    <property type="gene ID" value="WBGene00044689"/>
    <property type="gene designation" value="arid-1"/>
</dbReference>
<dbReference type="WormBase" id="Y108G3AL.7c">
    <molecule id="A0A0K3AXH1-3"/>
    <property type="protein sequence ID" value="CE50724"/>
    <property type="gene ID" value="WBGene00044689"/>
    <property type="gene designation" value="arid-1"/>
</dbReference>
<dbReference type="WormBase" id="Y108G3AL.7d">
    <molecule id="A0A0K3AXH1-4"/>
    <property type="protein sequence ID" value="CE50859"/>
    <property type="gene ID" value="WBGene00044689"/>
    <property type="gene designation" value="arid-1"/>
</dbReference>
<dbReference type="WormBase" id="Y108G3AL.7e">
    <molecule id="A0A0K3AXH1-5"/>
    <property type="protein sequence ID" value="CE50811"/>
    <property type="gene ID" value="WBGene00044689"/>
    <property type="gene designation" value="arid-1"/>
</dbReference>
<dbReference type="WormBase" id="Y108G3AL.7f">
    <molecule id="A0A0K3AXH1-6"/>
    <property type="protein sequence ID" value="CE50718"/>
    <property type="gene ID" value="WBGene00044689"/>
    <property type="gene designation" value="arid-1"/>
</dbReference>
<dbReference type="WormBase" id="Y108G3AL.7g">
    <molecule id="A0A0K3AXH1-7"/>
    <property type="protein sequence ID" value="CE50883"/>
    <property type="gene ID" value="WBGene00044689"/>
    <property type="gene designation" value="arid-1"/>
</dbReference>
<dbReference type="WormBase" id="Y108G3AL.7h">
    <molecule id="A0A0K3AXH1-8"/>
    <property type="protein sequence ID" value="CE50807"/>
    <property type="gene ID" value="WBGene00044689"/>
    <property type="gene designation" value="arid-1"/>
</dbReference>
<dbReference type="WormBase" id="Y108G3AL.7i">
    <molecule id="A0A0K3AXH1-9"/>
    <property type="protein sequence ID" value="CE35266"/>
    <property type="gene ID" value="WBGene00044689"/>
    <property type="gene designation" value="arid-1"/>
</dbReference>
<dbReference type="eggNOG" id="KOG2744">
    <property type="taxonomic scope" value="Eukaryota"/>
</dbReference>
<dbReference type="GeneTree" id="ENSGT00940000169343"/>
<dbReference type="HOGENOM" id="CLU_237944_0_0_1"/>
<dbReference type="InParanoid" id="A0A0K3AXH1"/>
<dbReference type="OMA" id="THYTGWN"/>
<dbReference type="OrthoDB" id="10068428at2759"/>
<dbReference type="PRO" id="PR:A0A0K3AXH1"/>
<dbReference type="Proteomes" id="UP000001940">
    <property type="component" value="Chromosome V"/>
</dbReference>
<dbReference type="Bgee" id="WBGene00044689">
    <property type="expression patterns" value="Expressed in embryo and 3 other cell types or tissues"/>
</dbReference>
<dbReference type="ExpressionAtlas" id="A0A0K3AXH1">
    <property type="expression patterns" value="baseline and differential"/>
</dbReference>
<dbReference type="GO" id="GO:0005634">
    <property type="term" value="C:nucleus"/>
    <property type="evidence" value="ECO:0000318"/>
    <property type="project" value="GO_Central"/>
</dbReference>
<dbReference type="GO" id="GO:0017053">
    <property type="term" value="C:transcription repressor complex"/>
    <property type="evidence" value="ECO:0000250"/>
    <property type="project" value="WormBase"/>
</dbReference>
<dbReference type="GO" id="GO:0003677">
    <property type="term" value="F:DNA binding"/>
    <property type="evidence" value="ECO:0000250"/>
    <property type="project" value="WormBase"/>
</dbReference>
<dbReference type="GO" id="GO:0000976">
    <property type="term" value="F:transcription cis-regulatory region binding"/>
    <property type="evidence" value="ECO:0000318"/>
    <property type="project" value="GO_Central"/>
</dbReference>
<dbReference type="GO" id="GO:0098542">
    <property type="term" value="P:defense response to other organism"/>
    <property type="evidence" value="ECO:0000316"/>
    <property type="project" value="UniProtKB"/>
</dbReference>
<dbReference type="GO" id="GO:0036503">
    <property type="term" value="P:ERAD pathway"/>
    <property type="evidence" value="ECO:0000315"/>
    <property type="project" value="UniProtKB"/>
</dbReference>
<dbReference type="GO" id="GO:0010498">
    <property type="term" value="P:proteasomal protein catabolic process"/>
    <property type="evidence" value="ECO:0000315"/>
    <property type="project" value="UniProtKB"/>
</dbReference>
<dbReference type="GO" id="GO:0006355">
    <property type="term" value="P:regulation of DNA-templated transcription"/>
    <property type="evidence" value="ECO:0000250"/>
    <property type="project" value="WormBase"/>
</dbReference>
<dbReference type="GO" id="GO:0006357">
    <property type="term" value="P:regulation of transcription by RNA polymerase II"/>
    <property type="evidence" value="ECO:0000318"/>
    <property type="project" value="GO_Central"/>
</dbReference>
<dbReference type="GO" id="GO:0034976">
    <property type="term" value="P:response to endoplasmic reticulum stress"/>
    <property type="evidence" value="ECO:0000316"/>
    <property type="project" value="UniProtKB"/>
</dbReference>
<dbReference type="CDD" id="cd16100">
    <property type="entry name" value="ARID"/>
    <property type="match status" value="1"/>
</dbReference>
<dbReference type="CDD" id="cd20390">
    <property type="entry name" value="Tudor_ARID4_rpt2"/>
    <property type="match status" value="1"/>
</dbReference>
<dbReference type="Gene3D" id="2.30.30.140">
    <property type="match status" value="1"/>
</dbReference>
<dbReference type="Gene3D" id="1.10.150.60">
    <property type="entry name" value="ARID DNA-binding domain"/>
    <property type="match status" value="1"/>
</dbReference>
<dbReference type="InterPro" id="IPR051232">
    <property type="entry name" value="ARID/SWI1_ChromRemod"/>
</dbReference>
<dbReference type="InterPro" id="IPR001606">
    <property type="entry name" value="ARID_dom"/>
</dbReference>
<dbReference type="InterPro" id="IPR036431">
    <property type="entry name" value="ARID_dom_sf"/>
</dbReference>
<dbReference type="PANTHER" id="PTHR13964:SF27">
    <property type="entry name" value="HAT-TRICK, ISOFORM D"/>
    <property type="match status" value="1"/>
</dbReference>
<dbReference type="PANTHER" id="PTHR13964">
    <property type="entry name" value="RBP-RELATED"/>
    <property type="match status" value="1"/>
</dbReference>
<dbReference type="Pfam" id="PF01388">
    <property type="entry name" value="ARID"/>
    <property type="match status" value="1"/>
</dbReference>
<dbReference type="SMART" id="SM01014">
    <property type="entry name" value="ARID"/>
    <property type="match status" value="1"/>
</dbReference>
<dbReference type="SMART" id="SM00501">
    <property type="entry name" value="BRIGHT"/>
    <property type="match status" value="1"/>
</dbReference>
<dbReference type="SUPFAM" id="SSF46774">
    <property type="entry name" value="ARID-like"/>
    <property type="match status" value="1"/>
</dbReference>
<dbReference type="PROSITE" id="PS51011">
    <property type="entry name" value="ARID"/>
    <property type="match status" value="1"/>
</dbReference>